<gene>
    <name evidence="1" type="primary">dxs</name>
    <name type="ordered locus">Bpro_1747</name>
</gene>
<keyword id="KW-0414">Isoprene biosynthesis</keyword>
<keyword id="KW-0460">Magnesium</keyword>
<keyword id="KW-0479">Metal-binding</keyword>
<keyword id="KW-1185">Reference proteome</keyword>
<keyword id="KW-0784">Thiamine biosynthesis</keyword>
<keyword id="KW-0786">Thiamine pyrophosphate</keyword>
<keyword id="KW-0808">Transferase</keyword>
<feature type="chain" id="PRO_0000256454" description="1-deoxy-D-xylulose-5-phosphate synthase">
    <location>
        <begin position="1"/>
        <end position="635"/>
    </location>
</feature>
<feature type="binding site" evidence="1">
    <location>
        <position position="74"/>
    </location>
    <ligand>
        <name>thiamine diphosphate</name>
        <dbReference type="ChEBI" id="CHEBI:58937"/>
    </ligand>
</feature>
<feature type="binding site" evidence="1">
    <location>
        <begin position="115"/>
        <end position="117"/>
    </location>
    <ligand>
        <name>thiamine diphosphate</name>
        <dbReference type="ChEBI" id="CHEBI:58937"/>
    </ligand>
</feature>
<feature type="binding site" evidence="1">
    <location>
        <position position="146"/>
    </location>
    <ligand>
        <name>Mg(2+)</name>
        <dbReference type="ChEBI" id="CHEBI:18420"/>
    </ligand>
</feature>
<feature type="binding site" evidence="1">
    <location>
        <begin position="147"/>
        <end position="148"/>
    </location>
    <ligand>
        <name>thiamine diphosphate</name>
        <dbReference type="ChEBI" id="CHEBI:58937"/>
    </ligand>
</feature>
<feature type="binding site" evidence="1">
    <location>
        <position position="176"/>
    </location>
    <ligand>
        <name>Mg(2+)</name>
        <dbReference type="ChEBI" id="CHEBI:18420"/>
    </ligand>
</feature>
<feature type="binding site" evidence="1">
    <location>
        <position position="176"/>
    </location>
    <ligand>
        <name>thiamine diphosphate</name>
        <dbReference type="ChEBI" id="CHEBI:58937"/>
    </ligand>
</feature>
<feature type="binding site" evidence="1">
    <location>
        <position position="283"/>
    </location>
    <ligand>
        <name>thiamine diphosphate</name>
        <dbReference type="ChEBI" id="CHEBI:58937"/>
    </ligand>
</feature>
<feature type="binding site" evidence="1">
    <location>
        <position position="365"/>
    </location>
    <ligand>
        <name>thiamine diphosphate</name>
        <dbReference type="ChEBI" id="CHEBI:58937"/>
    </ligand>
</feature>
<organism>
    <name type="scientific">Polaromonas sp. (strain JS666 / ATCC BAA-500)</name>
    <dbReference type="NCBI Taxonomy" id="296591"/>
    <lineage>
        <taxon>Bacteria</taxon>
        <taxon>Pseudomonadati</taxon>
        <taxon>Pseudomonadota</taxon>
        <taxon>Betaproteobacteria</taxon>
        <taxon>Burkholderiales</taxon>
        <taxon>Comamonadaceae</taxon>
        <taxon>Polaromonas</taxon>
    </lineage>
</organism>
<comment type="function">
    <text evidence="1">Catalyzes the acyloin condensation reaction between C atoms 2 and 3 of pyruvate and glyceraldehyde 3-phosphate to yield 1-deoxy-D-xylulose-5-phosphate (DXP).</text>
</comment>
<comment type="catalytic activity">
    <reaction evidence="1">
        <text>D-glyceraldehyde 3-phosphate + pyruvate + H(+) = 1-deoxy-D-xylulose 5-phosphate + CO2</text>
        <dbReference type="Rhea" id="RHEA:12605"/>
        <dbReference type="ChEBI" id="CHEBI:15361"/>
        <dbReference type="ChEBI" id="CHEBI:15378"/>
        <dbReference type="ChEBI" id="CHEBI:16526"/>
        <dbReference type="ChEBI" id="CHEBI:57792"/>
        <dbReference type="ChEBI" id="CHEBI:59776"/>
        <dbReference type="EC" id="2.2.1.7"/>
    </reaction>
</comment>
<comment type="cofactor">
    <cofactor evidence="1">
        <name>Mg(2+)</name>
        <dbReference type="ChEBI" id="CHEBI:18420"/>
    </cofactor>
    <text evidence="1">Binds 1 Mg(2+) ion per subunit.</text>
</comment>
<comment type="cofactor">
    <cofactor evidence="1">
        <name>thiamine diphosphate</name>
        <dbReference type="ChEBI" id="CHEBI:58937"/>
    </cofactor>
    <text evidence="1">Binds 1 thiamine pyrophosphate per subunit.</text>
</comment>
<comment type="pathway">
    <text evidence="1">Metabolic intermediate biosynthesis; 1-deoxy-D-xylulose 5-phosphate biosynthesis; 1-deoxy-D-xylulose 5-phosphate from D-glyceraldehyde 3-phosphate and pyruvate: step 1/1.</text>
</comment>
<comment type="subunit">
    <text evidence="1">Homodimer.</text>
</comment>
<comment type="similarity">
    <text evidence="1">Belongs to the transketolase family. DXPS subfamily.</text>
</comment>
<proteinExistence type="inferred from homology"/>
<dbReference type="EC" id="2.2.1.7" evidence="1"/>
<dbReference type="EMBL" id="CP000316">
    <property type="protein sequence ID" value="ABE43683.1"/>
    <property type="molecule type" value="Genomic_DNA"/>
</dbReference>
<dbReference type="RefSeq" id="WP_011482682.1">
    <property type="nucleotide sequence ID" value="NC_007948.1"/>
</dbReference>
<dbReference type="SMR" id="Q12CQ9"/>
<dbReference type="STRING" id="296591.Bpro_1747"/>
<dbReference type="KEGG" id="pol:Bpro_1747"/>
<dbReference type="eggNOG" id="COG1154">
    <property type="taxonomic scope" value="Bacteria"/>
</dbReference>
<dbReference type="HOGENOM" id="CLU_009227_1_4_4"/>
<dbReference type="OrthoDB" id="9803371at2"/>
<dbReference type="UniPathway" id="UPA00064">
    <property type="reaction ID" value="UER00091"/>
</dbReference>
<dbReference type="Proteomes" id="UP000001983">
    <property type="component" value="Chromosome"/>
</dbReference>
<dbReference type="GO" id="GO:0005829">
    <property type="term" value="C:cytosol"/>
    <property type="evidence" value="ECO:0007669"/>
    <property type="project" value="TreeGrafter"/>
</dbReference>
<dbReference type="GO" id="GO:0008661">
    <property type="term" value="F:1-deoxy-D-xylulose-5-phosphate synthase activity"/>
    <property type="evidence" value="ECO:0007669"/>
    <property type="project" value="UniProtKB-UniRule"/>
</dbReference>
<dbReference type="GO" id="GO:0000287">
    <property type="term" value="F:magnesium ion binding"/>
    <property type="evidence" value="ECO:0007669"/>
    <property type="project" value="UniProtKB-UniRule"/>
</dbReference>
<dbReference type="GO" id="GO:0030976">
    <property type="term" value="F:thiamine pyrophosphate binding"/>
    <property type="evidence" value="ECO:0007669"/>
    <property type="project" value="UniProtKB-UniRule"/>
</dbReference>
<dbReference type="GO" id="GO:0052865">
    <property type="term" value="P:1-deoxy-D-xylulose 5-phosphate biosynthetic process"/>
    <property type="evidence" value="ECO:0007669"/>
    <property type="project" value="UniProtKB-UniPathway"/>
</dbReference>
<dbReference type="GO" id="GO:0019288">
    <property type="term" value="P:isopentenyl diphosphate biosynthetic process, methylerythritol 4-phosphate pathway"/>
    <property type="evidence" value="ECO:0007669"/>
    <property type="project" value="TreeGrafter"/>
</dbReference>
<dbReference type="GO" id="GO:0016114">
    <property type="term" value="P:terpenoid biosynthetic process"/>
    <property type="evidence" value="ECO:0007669"/>
    <property type="project" value="UniProtKB-UniRule"/>
</dbReference>
<dbReference type="GO" id="GO:0009228">
    <property type="term" value="P:thiamine biosynthetic process"/>
    <property type="evidence" value="ECO:0007669"/>
    <property type="project" value="UniProtKB-UniRule"/>
</dbReference>
<dbReference type="CDD" id="cd02007">
    <property type="entry name" value="TPP_DXS"/>
    <property type="match status" value="1"/>
</dbReference>
<dbReference type="CDD" id="cd07033">
    <property type="entry name" value="TPP_PYR_DXS_TK_like"/>
    <property type="match status" value="1"/>
</dbReference>
<dbReference type="FunFam" id="3.40.50.920:FF:000002">
    <property type="entry name" value="1-deoxy-D-xylulose-5-phosphate synthase"/>
    <property type="match status" value="1"/>
</dbReference>
<dbReference type="FunFam" id="3.40.50.970:FF:000005">
    <property type="entry name" value="1-deoxy-D-xylulose-5-phosphate synthase"/>
    <property type="match status" value="1"/>
</dbReference>
<dbReference type="Gene3D" id="3.40.50.920">
    <property type="match status" value="1"/>
</dbReference>
<dbReference type="Gene3D" id="3.40.50.970">
    <property type="match status" value="2"/>
</dbReference>
<dbReference type="HAMAP" id="MF_00315">
    <property type="entry name" value="DXP_synth"/>
    <property type="match status" value="1"/>
</dbReference>
<dbReference type="InterPro" id="IPR005477">
    <property type="entry name" value="Dxylulose-5-P_synthase"/>
</dbReference>
<dbReference type="InterPro" id="IPR029061">
    <property type="entry name" value="THDP-binding"/>
</dbReference>
<dbReference type="InterPro" id="IPR009014">
    <property type="entry name" value="Transketo_C/PFOR_II"/>
</dbReference>
<dbReference type="InterPro" id="IPR005475">
    <property type="entry name" value="Transketolase-like_Pyr-bd"/>
</dbReference>
<dbReference type="InterPro" id="IPR020826">
    <property type="entry name" value="Transketolase_BS"/>
</dbReference>
<dbReference type="InterPro" id="IPR033248">
    <property type="entry name" value="Transketolase_C"/>
</dbReference>
<dbReference type="InterPro" id="IPR049557">
    <property type="entry name" value="Transketolase_CS"/>
</dbReference>
<dbReference type="NCBIfam" id="TIGR00204">
    <property type="entry name" value="dxs"/>
    <property type="match status" value="1"/>
</dbReference>
<dbReference type="NCBIfam" id="NF003933">
    <property type="entry name" value="PRK05444.2-2"/>
    <property type="match status" value="1"/>
</dbReference>
<dbReference type="PANTHER" id="PTHR43322">
    <property type="entry name" value="1-D-DEOXYXYLULOSE 5-PHOSPHATE SYNTHASE-RELATED"/>
    <property type="match status" value="1"/>
</dbReference>
<dbReference type="PANTHER" id="PTHR43322:SF5">
    <property type="entry name" value="1-DEOXY-D-XYLULOSE-5-PHOSPHATE SYNTHASE, CHLOROPLASTIC"/>
    <property type="match status" value="1"/>
</dbReference>
<dbReference type="Pfam" id="PF13292">
    <property type="entry name" value="DXP_synthase_N"/>
    <property type="match status" value="1"/>
</dbReference>
<dbReference type="Pfam" id="PF02779">
    <property type="entry name" value="Transket_pyr"/>
    <property type="match status" value="1"/>
</dbReference>
<dbReference type="Pfam" id="PF02780">
    <property type="entry name" value="Transketolase_C"/>
    <property type="match status" value="1"/>
</dbReference>
<dbReference type="SMART" id="SM00861">
    <property type="entry name" value="Transket_pyr"/>
    <property type="match status" value="1"/>
</dbReference>
<dbReference type="SUPFAM" id="SSF52518">
    <property type="entry name" value="Thiamin diphosphate-binding fold (THDP-binding)"/>
    <property type="match status" value="2"/>
</dbReference>
<dbReference type="SUPFAM" id="SSF52922">
    <property type="entry name" value="TK C-terminal domain-like"/>
    <property type="match status" value="1"/>
</dbReference>
<dbReference type="PROSITE" id="PS00801">
    <property type="entry name" value="TRANSKETOLASE_1"/>
    <property type="match status" value="1"/>
</dbReference>
<dbReference type="PROSITE" id="PS00802">
    <property type="entry name" value="TRANSKETOLASE_2"/>
    <property type="match status" value="1"/>
</dbReference>
<accession>Q12CQ9</accession>
<name>DXS_POLSJ</name>
<protein>
    <recommendedName>
        <fullName evidence="1">1-deoxy-D-xylulose-5-phosphate synthase</fullName>
        <ecNumber evidence="1">2.2.1.7</ecNumber>
    </recommendedName>
    <alternativeName>
        <fullName evidence="1">1-deoxyxylulose-5-phosphate synthase</fullName>
        <shortName evidence="1">DXP synthase</shortName>
        <shortName evidence="1">DXPS</shortName>
    </alternativeName>
</protein>
<reference key="1">
    <citation type="journal article" date="2008" name="Appl. Environ. Microbiol.">
        <title>The genome of Polaromonas sp. strain JS666: insights into the evolution of a hydrocarbon- and xenobiotic-degrading bacterium, and features of relevance to biotechnology.</title>
        <authorList>
            <person name="Mattes T.E."/>
            <person name="Alexander A.K."/>
            <person name="Richardson P.M."/>
            <person name="Munk A.C."/>
            <person name="Han C.S."/>
            <person name="Stothard P."/>
            <person name="Coleman N.V."/>
        </authorList>
    </citation>
    <scope>NUCLEOTIDE SEQUENCE [LARGE SCALE GENOMIC DNA]</scope>
    <source>
        <strain>JS666 / ATCC BAA-500</strain>
    </source>
</reference>
<evidence type="ECO:0000255" key="1">
    <source>
        <dbReference type="HAMAP-Rule" id="MF_00315"/>
    </source>
</evidence>
<sequence length="635" mass="67881">MYPLLETINSPADLRRLPRAQLKALADELRAFVLDSVSKTGGHLSSNLGTVELTVALHYVFNTPEDRLVWDVGHQTYPHKILTGRRDRMGSLRQFGGLSGFPRRDESPYDTFGTAHSSTSISAALGMALAAHQQGEDRHAVAIIGDGAMSAGMAFEALNNAGVHDDCKLLVVLNDNDMSISPPVGALNRYLAQLMSGRFYASAKNVGKQVLRVAPPLLELAKRLEAHAKGMVVPATLFENFGFNYIGPIDGHDLESLIPTLENIKHLKGPQFLHVVTKKGQGYKLAEADPVAYHGPGKFDPAMGLQKSSAPAKRTFTQVFGQWLCDMAEQDKRLVGITPAMREGSGMVEFHKRFPGRYHDVGIAEQHAVTFAAGMACEGLKPVVAIYSTFLQRGYDQLIHDVALQNLPVVFALDRAGLVGADGATHAGAYDIPFLRCIPNMSVACPADENECRKLLSSAFEQNHPVAVRYPRGAGAGVEPEPGLQPLPFGKGEIRREGSGVAILAFGTLLYPALQAAEKLGVTVVNMRWAKPLDTELLLKVAASHEALVTLEEGAIMGGAGSAVGEALQAAGLGKPLLQLGLKDEFIEHGDPAKLLALQGLDAAGIEAAVMARFGSVLQPEKSGKPAKPALKSVA</sequence>